<evidence type="ECO:0000250" key="1"/>
<evidence type="ECO:0000255" key="2">
    <source>
        <dbReference type="HAMAP-Rule" id="MF_00062"/>
    </source>
</evidence>
<proteinExistence type="inferred from homology"/>
<accession>C0PXB1</accession>
<comment type="function">
    <text evidence="2">With CysD forms the ATP sulfurylase (ATPS) that catalyzes the adenylation of sulfate producing adenosine 5'-phosphosulfate (APS) and diphosphate, the first enzymatic step in sulfur assimilation pathway. APS synthesis involves the formation of a high-energy phosphoric-sulfuric acid anhydride bond driven by GTP hydrolysis by CysN coupled to ATP hydrolysis by CysD.</text>
</comment>
<comment type="catalytic activity">
    <reaction evidence="2">
        <text>sulfate + ATP + H(+) = adenosine 5'-phosphosulfate + diphosphate</text>
        <dbReference type="Rhea" id="RHEA:18133"/>
        <dbReference type="ChEBI" id="CHEBI:15378"/>
        <dbReference type="ChEBI" id="CHEBI:16189"/>
        <dbReference type="ChEBI" id="CHEBI:30616"/>
        <dbReference type="ChEBI" id="CHEBI:33019"/>
        <dbReference type="ChEBI" id="CHEBI:58243"/>
        <dbReference type="EC" id="2.7.7.4"/>
    </reaction>
</comment>
<comment type="pathway">
    <text evidence="2">Sulfur metabolism; hydrogen sulfide biosynthesis; sulfite from sulfate: step 1/3.</text>
</comment>
<comment type="subunit">
    <text evidence="2">Heterodimer composed of CysD, the smaller subunit, and CysN.</text>
</comment>
<comment type="similarity">
    <text evidence="2">Belongs to the TRAFAC class translation factor GTPase superfamily. Classic translation factor GTPase family. CysN/NodQ subfamily.</text>
</comment>
<name>CYSN_SALPC</name>
<sequence>MNTILAQQIANEGGVEAWMIAQQHKSLLRFLTCGSVDDGKSTLIGRLLHDTLQIYEDQLSSLHNDSKRHGTQGEKLDLALLVDGLQAEREQGITIDVAYRYFSTEKRKFIIADTPGHEQYTRNMATGASTCDLAILLIDARKGVLDQTRRHSFISTLLGIKHLVVAINKMDLVGYREETFARIREDYLTFAEQLPGDLDIRFVPLSALEGDNVAAQSANMRWYSGPTLLEVLETVDIQRAVDRQPMRFPVQYVNRPNLDFRGYAGTLASGSVKVGERIKVLPSGVESSVARIVTFDGDKEEACAGEAITLVLNDDIDISRGDLLLAANETLAPARHAAIDVVWMAEQPLAPGQSYDVKLAGKKTRARIEAIRYQIDINNLTQRDVESLPLNGIGLVEMTFDEPLALDIYQQNPVTGGLIFIDRLSNVTVGAGMVRELDERGATPSVEYSAFELELNALVRRHFPHWDARDLLGDKHGAA</sequence>
<keyword id="KW-0067">ATP-binding</keyword>
<keyword id="KW-0342">GTP-binding</keyword>
<keyword id="KW-0547">Nucleotide-binding</keyword>
<keyword id="KW-0548">Nucleotidyltransferase</keyword>
<keyword id="KW-0808">Transferase</keyword>
<gene>
    <name evidence="2" type="primary">cysN</name>
    <name type="ordered locus">SPC_2977</name>
</gene>
<organism>
    <name type="scientific">Salmonella paratyphi C (strain RKS4594)</name>
    <dbReference type="NCBI Taxonomy" id="476213"/>
    <lineage>
        <taxon>Bacteria</taxon>
        <taxon>Pseudomonadati</taxon>
        <taxon>Pseudomonadota</taxon>
        <taxon>Gammaproteobacteria</taxon>
        <taxon>Enterobacterales</taxon>
        <taxon>Enterobacteriaceae</taxon>
        <taxon>Salmonella</taxon>
    </lineage>
</organism>
<protein>
    <recommendedName>
        <fullName evidence="2">Sulfate adenylyltransferase subunit 1</fullName>
        <ecNumber evidence="2">2.7.7.4</ecNumber>
    </recommendedName>
    <alternativeName>
        <fullName evidence="2">ATP-sulfurylase large subunit</fullName>
    </alternativeName>
    <alternativeName>
        <fullName evidence="2">Sulfate adenylate transferase</fullName>
        <shortName evidence="2">SAT</shortName>
    </alternativeName>
</protein>
<reference key="1">
    <citation type="journal article" date="2009" name="PLoS ONE">
        <title>Salmonella paratyphi C: genetic divergence from Salmonella choleraesuis and pathogenic convergence with Salmonella typhi.</title>
        <authorList>
            <person name="Liu W.-Q."/>
            <person name="Feng Y."/>
            <person name="Wang Y."/>
            <person name="Zou Q.-H."/>
            <person name="Chen F."/>
            <person name="Guo J.-T."/>
            <person name="Peng Y.-H."/>
            <person name="Jin Y."/>
            <person name="Li Y.-G."/>
            <person name="Hu S.-N."/>
            <person name="Johnston R.N."/>
            <person name="Liu G.-R."/>
            <person name="Liu S.-L."/>
        </authorList>
    </citation>
    <scope>NUCLEOTIDE SEQUENCE [LARGE SCALE GENOMIC DNA]</scope>
    <source>
        <strain>RKS4594</strain>
    </source>
</reference>
<dbReference type="EC" id="2.7.7.4" evidence="2"/>
<dbReference type="EMBL" id="CP000857">
    <property type="protein sequence ID" value="ACN47069.1"/>
    <property type="molecule type" value="Genomic_DNA"/>
</dbReference>
<dbReference type="RefSeq" id="WP_001092261.1">
    <property type="nucleotide sequence ID" value="NC_012125.1"/>
</dbReference>
<dbReference type="SMR" id="C0PXB1"/>
<dbReference type="KEGG" id="sei:SPC_2977"/>
<dbReference type="HOGENOM" id="CLU_007265_5_2_6"/>
<dbReference type="UniPathway" id="UPA00140">
    <property type="reaction ID" value="UER00204"/>
</dbReference>
<dbReference type="Proteomes" id="UP000001599">
    <property type="component" value="Chromosome"/>
</dbReference>
<dbReference type="GO" id="GO:0005524">
    <property type="term" value="F:ATP binding"/>
    <property type="evidence" value="ECO:0007669"/>
    <property type="project" value="UniProtKB-KW"/>
</dbReference>
<dbReference type="GO" id="GO:0005525">
    <property type="term" value="F:GTP binding"/>
    <property type="evidence" value="ECO:0007669"/>
    <property type="project" value="UniProtKB-UniRule"/>
</dbReference>
<dbReference type="GO" id="GO:0003924">
    <property type="term" value="F:GTPase activity"/>
    <property type="evidence" value="ECO:0007669"/>
    <property type="project" value="InterPro"/>
</dbReference>
<dbReference type="GO" id="GO:0004781">
    <property type="term" value="F:sulfate adenylyltransferase (ATP) activity"/>
    <property type="evidence" value="ECO:0007669"/>
    <property type="project" value="UniProtKB-UniRule"/>
</dbReference>
<dbReference type="GO" id="GO:0070814">
    <property type="term" value="P:hydrogen sulfide biosynthetic process"/>
    <property type="evidence" value="ECO:0007669"/>
    <property type="project" value="UniProtKB-UniRule"/>
</dbReference>
<dbReference type="GO" id="GO:0000103">
    <property type="term" value="P:sulfate assimilation"/>
    <property type="evidence" value="ECO:0007669"/>
    <property type="project" value="UniProtKB-UniRule"/>
</dbReference>
<dbReference type="CDD" id="cd04166">
    <property type="entry name" value="CysN_ATPS"/>
    <property type="match status" value="1"/>
</dbReference>
<dbReference type="CDD" id="cd03695">
    <property type="entry name" value="CysN_NodQ_II"/>
    <property type="match status" value="1"/>
</dbReference>
<dbReference type="CDD" id="cd04095">
    <property type="entry name" value="CysN_NoDQ_III"/>
    <property type="match status" value="1"/>
</dbReference>
<dbReference type="FunFam" id="2.40.30.10:FF:000027">
    <property type="entry name" value="Sulfate adenylyltransferase subunit 1"/>
    <property type="match status" value="1"/>
</dbReference>
<dbReference type="FunFam" id="2.40.30.10:FF:000031">
    <property type="entry name" value="Sulfate adenylyltransferase subunit 1"/>
    <property type="match status" value="1"/>
</dbReference>
<dbReference type="FunFam" id="3.40.50.300:FF:000119">
    <property type="entry name" value="Sulfate adenylyltransferase subunit 1"/>
    <property type="match status" value="1"/>
</dbReference>
<dbReference type="Gene3D" id="3.40.50.300">
    <property type="entry name" value="P-loop containing nucleotide triphosphate hydrolases"/>
    <property type="match status" value="1"/>
</dbReference>
<dbReference type="Gene3D" id="2.40.30.10">
    <property type="entry name" value="Translation factors"/>
    <property type="match status" value="2"/>
</dbReference>
<dbReference type="HAMAP" id="MF_00062">
    <property type="entry name" value="Sulf_adenylyltr_sub1"/>
    <property type="match status" value="1"/>
</dbReference>
<dbReference type="InterPro" id="IPR041757">
    <property type="entry name" value="CysN_GTP-bd"/>
</dbReference>
<dbReference type="InterPro" id="IPR044138">
    <property type="entry name" value="CysN_II"/>
</dbReference>
<dbReference type="InterPro" id="IPR044139">
    <property type="entry name" value="CysN_NoDQ_III"/>
</dbReference>
<dbReference type="InterPro" id="IPR031157">
    <property type="entry name" value="G_TR_CS"/>
</dbReference>
<dbReference type="InterPro" id="IPR054696">
    <property type="entry name" value="GTP-eEF1A_C"/>
</dbReference>
<dbReference type="InterPro" id="IPR027417">
    <property type="entry name" value="P-loop_NTPase"/>
</dbReference>
<dbReference type="InterPro" id="IPR005225">
    <property type="entry name" value="Small_GTP-bd"/>
</dbReference>
<dbReference type="InterPro" id="IPR011779">
    <property type="entry name" value="SO4_adenylTrfase_lsu"/>
</dbReference>
<dbReference type="InterPro" id="IPR000795">
    <property type="entry name" value="T_Tr_GTP-bd_dom"/>
</dbReference>
<dbReference type="InterPro" id="IPR050100">
    <property type="entry name" value="TRAFAC_GTPase_members"/>
</dbReference>
<dbReference type="InterPro" id="IPR009000">
    <property type="entry name" value="Transl_B-barrel_sf"/>
</dbReference>
<dbReference type="InterPro" id="IPR009001">
    <property type="entry name" value="Transl_elong_EF1A/Init_IF2_C"/>
</dbReference>
<dbReference type="NCBIfam" id="TIGR02034">
    <property type="entry name" value="CysN"/>
    <property type="match status" value="1"/>
</dbReference>
<dbReference type="NCBIfam" id="NF003478">
    <property type="entry name" value="PRK05124.1"/>
    <property type="match status" value="1"/>
</dbReference>
<dbReference type="NCBIfam" id="TIGR00231">
    <property type="entry name" value="small_GTP"/>
    <property type="match status" value="1"/>
</dbReference>
<dbReference type="PANTHER" id="PTHR23115">
    <property type="entry name" value="TRANSLATION FACTOR"/>
    <property type="match status" value="1"/>
</dbReference>
<dbReference type="Pfam" id="PF22594">
    <property type="entry name" value="GTP-eEF1A_C"/>
    <property type="match status" value="1"/>
</dbReference>
<dbReference type="Pfam" id="PF00009">
    <property type="entry name" value="GTP_EFTU"/>
    <property type="match status" value="1"/>
</dbReference>
<dbReference type="PRINTS" id="PR00315">
    <property type="entry name" value="ELONGATNFCT"/>
</dbReference>
<dbReference type="SUPFAM" id="SSF50465">
    <property type="entry name" value="EF-Tu/eEF-1alpha/eIF2-gamma C-terminal domain"/>
    <property type="match status" value="1"/>
</dbReference>
<dbReference type="SUPFAM" id="SSF52540">
    <property type="entry name" value="P-loop containing nucleoside triphosphate hydrolases"/>
    <property type="match status" value="1"/>
</dbReference>
<dbReference type="SUPFAM" id="SSF50447">
    <property type="entry name" value="Translation proteins"/>
    <property type="match status" value="1"/>
</dbReference>
<dbReference type="PROSITE" id="PS00301">
    <property type="entry name" value="G_TR_1"/>
    <property type="match status" value="1"/>
</dbReference>
<dbReference type="PROSITE" id="PS51722">
    <property type="entry name" value="G_TR_2"/>
    <property type="match status" value="1"/>
</dbReference>
<feature type="chain" id="PRO_1000117917" description="Sulfate adenylyltransferase subunit 1">
    <location>
        <begin position="1"/>
        <end position="479"/>
    </location>
</feature>
<feature type="domain" description="tr-type G">
    <location>
        <begin position="25"/>
        <end position="239"/>
    </location>
</feature>
<feature type="region of interest" description="G1" evidence="1">
    <location>
        <begin position="34"/>
        <end position="41"/>
    </location>
</feature>
<feature type="region of interest" description="G2" evidence="1">
    <location>
        <begin position="92"/>
        <end position="96"/>
    </location>
</feature>
<feature type="region of interest" description="G3" evidence="1">
    <location>
        <begin position="113"/>
        <end position="116"/>
    </location>
</feature>
<feature type="region of interest" description="G4" evidence="1">
    <location>
        <begin position="168"/>
        <end position="171"/>
    </location>
</feature>
<feature type="region of interest" description="G5" evidence="1">
    <location>
        <begin position="206"/>
        <end position="208"/>
    </location>
</feature>
<feature type="binding site" evidence="2">
    <location>
        <begin position="34"/>
        <end position="41"/>
    </location>
    <ligand>
        <name>GTP</name>
        <dbReference type="ChEBI" id="CHEBI:37565"/>
    </ligand>
</feature>
<feature type="binding site" evidence="2">
    <location>
        <begin position="113"/>
        <end position="117"/>
    </location>
    <ligand>
        <name>GTP</name>
        <dbReference type="ChEBI" id="CHEBI:37565"/>
    </ligand>
</feature>
<feature type="binding site" evidence="2">
    <location>
        <begin position="168"/>
        <end position="171"/>
    </location>
    <ligand>
        <name>GTP</name>
        <dbReference type="ChEBI" id="CHEBI:37565"/>
    </ligand>
</feature>